<gene>
    <name evidence="1" type="primary">mnmA</name>
    <name type="synonym">trmU</name>
    <name type="ordered locus">RHA1_ro06467</name>
</gene>
<protein>
    <recommendedName>
        <fullName evidence="1">tRNA-specific 2-thiouridylase MnmA</fullName>
        <ecNumber evidence="1">2.8.1.13</ecNumber>
    </recommendedName>
</protein>
<reference key="1">
    <citation type="journal article" date="2006" name="Proc. Natl. Acad. Sci. U.S.A.">
        <title>The complete genome of Rhodococcus sp. RHA1 provides insights into a catabolic powerhouse.</title>
        <authorList>
            <person name="McLeod M.P."/>
            <person name="Warren R.L."/>
            <person name="Hsiao W.W.L."/>
            <person name="Araki N."/>
            <person name="Myhre M."/>
            <person name="Fernandes C."/>
            <person name="Miyazawa D."/>
            <person name="Wong W."/>
            <person name="Lillquist A.L."/>
            <person name="Wang D."/>
            <person name="Dosanjh M."/>
            <person name="Hara H."/>
            <person name="Petrescu A."/>
            <person name="Morin R.D."/>
            <person name="Yang G."/>
            <person name="Stott J.M."/>
            <person name="Schein J.E."/>
            <person name="Shin H."/>
            <person name="Smailus D."/>
            <person name="Siddiqui A.S."/>
            <person name="Marra M.A."/>
            <person name="Jones S.J.M."/>
            <person name="Holt R."/>
            <person name="Brinkman F.S.L."/>
            <person name="Miyauchi K."/>
            <person name="Fukuda M."/>
            <person name="Davies J.E."/>
            <person name="Mohn W.W."/>
            <person name="Eltis L.D."/>
        </authorList>
    </citation>
    <scope>NUCLEOTIDE SEQUENCE [LARGE SCALE GENOMIC DNA]</scope>
    <source>
        <strain>RHA1</strain>
    </source>
</reference>
<sequence>MRVLAAMSGGVDSAVAAARAVAAGHDVVGVHLALSAEPGTLRTGSRGCCSKEDAGDARRAADVLGIPFYVWDFADRFKEDVIDDFVASYAAGETPNPCLRCNEKIKFAALADRAIALGFDAVATGHYAQLENGVLRRAVDADKDQSYVLGVLTAEQLSRAMFPVGDTPKDRIREEAAERGLAVANKPDSHDICFIPSGDTRAFLGARIGVRPGSVVDADSGEVLAEHEGVHGFTIGQRKGLGVQGPAADGQPRYVTSIEPDTGTVRVGSARNLEVDAITADRAVWTSGSTPVGPVECTVQVRAHGGLAEAVAEAVDGGIAISLREPLTGVAKGQAVVLYRTDPAGDIVLGSGTISGTDARPNTQ</sequence>
<proteinExistence type="inferred from homology"/>
<keyword id="KW-0067">ATP-binding</keyword>
<keyword id="KW-0963">Cytoplasm</keyword>
<keyword id="KW-1015">Disulfide bond</keyword>
<keyword id="KW-0547">Nucleotide-binding</keyword>
<keyword id="KW-0694">RNA-binding</keyword>
<keyword id="KW-0808">Transferase</keyword>
<keyword id="KW-0819">tRNA processing</keyword>
<keyword id="KW-0820">tRNA-binding</keyword>
<feature type="chain" id="PRO_1000009563" description="tRNA-specific 2-thiouridylase MnmA">
    <location>
        <begin position="1"/>
        <end position="364"/>
    </location>
</feature>
<feature type="region of interest" description="Interaction with tRNA" evidence="1">
    <location>
        <begin position="143"/>
        <end position="145"/>
    </location>
</feature>
<feature type="active site" description="Nucleophile" evidence="1">
    <location>
        <position position="101"/>
    </location>
</feature>
<feature type="active site" description="Cysteine persulfide intermediate" evidence="1">
    <location>
        <position position="193"/>
    </location>
</feature>
<feature type="binding site" evidence="1">
    <location>
        <begin position="6"/>
        <end position="13"/>
    </location>
    <ligand>
        <name>ATP</name>
        <dbReference type="ChEBI" id="CHEBI:30616"/>
    </ligand>
</feature>
<feature type="binding site" evidence="1">
    <location>
        <position position="32"/>
    </location>
    <ligand>
        <name>ATP</name>
        <dbReference type="ChEBI" id="CHEBI:30616"/>
    </ligand>
</feature>
<feature type="binding site" evidence="1">
    <location>
        <position position="125"/>
    </location>
    <ligand>
        <name>ATP</name>
        <dbReference type="ChEBI" id="CHEBI:30616"/>
    </ligand>
</feature>
<feature type="site" description="Interaction with tRNA" evidence="1">
    <location>
        <position position="126"/>
    </location>
</feature>
<feature type="site" description="Interaction with tRNA" evidence="1">
    <location>
        <position position="334"/>
    </location>
</feature>
<feature type="disulfide bond" description="Alternate" evidence="1">
    <location>
        <begin position="101"/>
        <end position="193"/>
    </location>
</feature>
<dbReference type="EC" id="2.8.1.13" evidence="1"/>
<dbReference type="EMBL" id="CP000431">
    <property type="protein sequence ID" value="ABG98242.1"/>
    <property type="molecule type" value="Genomic_DNA"/>
</dbReference>
<dbReference type="RefSeq" id="WP_011598362.1">
    <property type="nucleotide sequence ID" value="NC_008268.1"/>
</dbReference>
<dbReference type="SMR" id="Q0S2J4"/>
<dbReference type="KEGG" id="rha:RHA1_ro06467"/>
<dbReference type="PATRIC" id="fig|101510.16.peg.6520"/>
<dbReference type="eggNOG" id="COG0482">
    <property type="taxonomic scope" value="Bacteria"/>
</dbReference>
<dbReference type="HOGENOM" id="CLU_035188_0_2_11"/>
<dbReference type="OrthoDB" id="9800696at2"/>
<dbReference type="Proteomes" id="UP000008710">
    <property type="component" value="Chromosome"/>
</dbReference>
<dbReference type="GO" id="GO:0005737">
    <property type="term" value="C:cytoplasm"/>
    <property type="evidence" value="ECO:0007669"/>
    <property type="project" value="UniProtKB-SubCell"/>
</dbReference>
<dbReference type="GO" id="GO:0005524">
    <property type="term" value="F:ATP binding"/>
    <property type="evidence" value="ECO:0007669"/>
    <property type="project" value="UniProtKB-KW"/>
</dbReference>
<dbReference type="GO" id="GO:0000049">
    <property type="term" value="F:tRNA binding"/>
    <property type="evidence" value="ECO:0007669"/>
    <property type="project" value="UniProtKB-KW"/>
</dbReference>
<dbReference type="GO" id="GO:0103016">
    <property type="term" value="F:tRNA-uridine 2-sulfurtransferase activity"/>
    <property type="evidence" value="ECO:0007669"/>
    <property type="project" value="UniProtKB-EC"/>
</dbReference>
<dbReference type="GO" id="GO:0002143">
    <property type="term" value="P:tRNA wobble position uridine thiolation"/>
    <property type="evidence" value="ECO:0007669"/>
    <property type="project" value="TreeGrafter"/>
</dbReference>
<dbReference type="CDD" id="cd01998">
    <property type="entry name" value="MnmA_TRMU-like"/>
    <property type="match status" value="1"/>
</dbReference>
<dbReference type="FunFam" id="3.40.50.620:FF:000057">
    <property type="entry name" value="tRNA-specific 2-thiouridylase MnmA"/>
    <property type="match status" value="1"/>
</dbReference>
<dbReference type="Gene3D" id="2.30.30.280">
    <property type="entry name" value="Adenine nucleotide alpha hydrolases-like domains"/>
    <property type="match status" value="1"/>
</dbReference>
<dbReference type="Gene3D" id="3.40.50.620">
    <property type="entry name" value="HUPs"/>
    <property type="match status" value="1"/>
</dbReference>
<dbReference type="Gene3D" id="2.40.30.10">
    <property type="entry name" value="Translation factors"/>
    <property type="match status" value="1"/>
</dbReference>
<dbReference type="HAMAP" id="MF_00144">
    <property type="entry name" value="tRNA_thiouridyl_MnmA"/>
    <property type="match status" value="1"/>
</dbReference>
<dbReference type="InterPro" id="IPR004506">
    <property type="entry name" value="MnmA-like"/>
</dbReference>
<dbReference type="InterPro" id="IPR046885">
    <property type="entry name" value="MnmA-like_C"/>
</dbReference>
<dbReference type="InterPro" id="IPR046884">
    <property type="entry name" value="MnmA-like_central"/>
</dbReference>
<dbReference type="InterPro" id="IPR023382">
    <property type="entry name" value="MnmA-like_central_sf"/>
</dbReference>
<dbReference type="InterPro" id="IPR014729">
    <property type="entry name" value="Rossmann-like_a/b/a_fold"/>
</dbReference>
<dbReference type="NCBIfam" id="NF001138">
    <property type="entry name" value="PRK00143.1"/>
    <property type="match status" value="1"/>
</dbReference>
<dbReference type="NCBIfam" id="TIGR00420">
    <property type="entry name" value="trmU"/>
    <property type="match status" value="1"/>
</dbReference>
<dbReference type="PANTHER" id="PTHR11933:SF5">
    <property type="entry name" value="MITOCHONDRIAL TRNA-SPECIFIC 2-THIOURIDYLASE 1"/>
    <property type="match status" value="1"/>
</dbReference>
<dbReference type="PANTHER" id="PTHR11933">
    <property type="entry name" value="TRNA 5-METHYLAMINOMETHYL-2-THIOURIDYLATE -METHYLTRANSFERASE"/>
    <property type="match status" value="1"/>
</dbReference>
<dbReference type="Pfam" id="PF03054">
    <property type="entry name" value="tRNA_Me_trans"/>
    <property type="match status" value="1"/>
</dbReference>
<dbReference type="Pfam" id="PF20258">
    <property type="entry name" value="tRNA_Me_trans_C"/>
    <property type="match status" value="1"/>
</dbReference>
<dbReference type="Pfam" id="PF20259">
    <property type="entry name" value="tRNA_Me_trans_M"/>
    <property type="match status" value="1"/>
</dbReference>
<dbReference type="SUPFAM" id="SSF52402">
    <property type="entry name" value="Adenine nucleotide alpha hydrolases-like"/>
    <property type="match status" value="1"/>
</dbReference>
<evidence type="ECO:0000255" key="1">
    <source>
        <dbReference type="HAMAP-Rule" id="MF_00144"/>
    </source>
</evidence>
<name>MNMA_RHOJR</name>
<organism>
    <name type="scientific">Rhodococcus jostii (strain RHA1)</name>
    <dbReference type="NCBI Taxonomy" id="101510"/>
    <lineage>
        <taxon>Bacteria</taxon>
        <taxon>Bacillati</taxon>
        <taxon>Actinomycetota</taxon>
        <taxon>Actinomycetes</taxon>
        <taxon>Mycobacteriales</taxon>
        <taxon>Nocardiaceae</taxon>
        <taxon>Rhodococcus</taxon>
    </lineage>
</organism>
<comment type="function">
    <text evidence="1">Catalyzes the 2-thiolation of uridine at the wobble position (U34) of tRNA, leading to the formation of s(2)U34.</text>
</comment>
<comment type="catalytic activity">
    <reaction evidence="1">
        <text>S-sulfanyl-L-cysteinyl-[protein] + uridine(34) in tRNA + AH2 + ATP = 2-thiouridine(34) in tRNA + L-cysteinyl-[protein] + A + AMP + diphosphate + H(+)</text>
        <dbReference type="Rhea" id="RHEA:47032"/>
        <dbReference type="Rhea" id="RHEA-COMP:10131"/>
        <dbReference type="Rhea" id="RHEA-COMP:11726"/>
        <dbReference type="Rhea" id="RHEA-COMP:11727"/>
        <dbReference type="Rhea" id="RHEA-COMP:11728"/>
        <dbReference type="ChEBI" id="CHEBI:13193"/>
        <dbReference type="ChEBI" id="CHEBI:15378"/>
        <dbReference type="ChEBI" id="CHEBI:17499"/>
        <dbReference type="ChEBI" id="CHEBI:29950"/>
        <dbReference type="ChEBI" id="CHEBI:30616"/>
        <dbReference type="ChEBI" id="CHEBI:33019"/>
        <dbReference type="ChEBI" id="CHEBI:61963"/>
        <dbReference type="ChEBI" id="CHEBI:65315"/>
        <dbReference type="ChEBI" id="CHEBI:87170"/>
        <dbReference type="ChEBI" id="CHEBI:456215"/>
        <dbReference type="EC" id="2.8.1.13"/>
    </reaction>
</comment>
<comment type="subcellular location">
    <subcellularLocation>
        <location evidence="1">Cytoplasm</location>
    </subcellularLocation>
</comment>
<comment type="similarity">
    <text evidence="1">Belongs to the MnmA/TRMU family.</text>
</comment>
<accession>Q0S2J4</accession>